<comment type="function">
    <text evidence="1">Serine/threonine-protein kinase involved in different processes such as apoptotic morphological changes, MAPK8/JNK and MAPK14/p38 MAPK signaling pathway.</text>
</comment>
<comment type="function">
    <text evidence="1">Activates the JNK MAP kinase pathway.</text>
</comment>
<comment type="catalytic activity">
    <reaction>
        <text>L-seryl-[protein] + ATP = O-phospho-L-seryl-[protein] + ADP + H(+)</text>
        <dbReference type="Rhea" id="RHEA:17989"/>
        <dbReference type="Rhea" id="RHEA-COMP:9863"/>
        <dbReference type="Rhea" id="RHEA-COMP:11604"/>
        <dbReference type="ChEBI" id="CHEBI:15378"/>
        <dbReference type="ChEBI" id="CHEBI:29999"/>
        <dbReference type="ChEBI" id="CHEBI:30616"/>
        <dbReference type="ChEBI" id="CHEBI:83421"/>
        <dbReference type="ChEBI" id="CHEBI:456216"/>
        <dbReference type="EC" id="2.7.11.1"/>
    </reaction>
</comment>
<comment type="catalytic activity">
    <reaction>
        <text>L-threonyl-[protein] + ATP = O-phospho-L-threonyl-[protein] + ADP + H(+)</text>
        <dbReference type="Rhea" id="RHEA:46608"/>
        <dbReference type="Rhea" id="RHEA-COMP:11060"/>
        <dbReference type="Rhea" id="RHEA-COMP:11605"/>
        <dbReference type="ChEBI" id="CHEBI:15378"/>
        <dbReference type="ChEBI" id="CHEBI:30013"/>
        <dbReference type="ChEBI" id="CHEBI:30616"/>
        <dbReference type="ChEBI" id="CHEBI:61977"/>
        <dbReference type="ChEBI" id="CHEBI:456216"/>
        <dbReference type="EC" id="2.7.11.1"/>
    </reaction>
</comment>
<comment type="cofactor">
    <cofactor evidence="1">
        <name>Mg(2+)</name>
        <dbReference type="ChEBI" id="CHEBI:18420"/>
    </cofactor>
</comment>
<comment type="similarity">
    <text evidence="6">Belongs to the protein kinase superfamily. STE Ser/Thr protein kinase family. STE20 subfamily.</text>
</comment>
<organism>
    <name type="scientific">Xenopus laevis</name>
    <name type="common">African clawed frog</name>
    <dbReference type="NCBI Taxonomy" id="8355"/>
    <lineage>
        <taxon>Eukaryota</taxon>
        <taxon>Metazoa</taxon>
        <taxon>Chordata</taxon>
        <taxon>Craniata</taxon>
        <taxon>Vertebrata</taxon>
        <taxon>Euteleostomi</taxon>
        <taxon>Amphibia</taxon>
        <taxon>Batrachia</taxon>
        <taxon>Anura</taxon>
        <taxon>Pipoidea</taxon>
        <taxon>Pipidae</taxon>
        <taxon>Xenopodinae</taxon>
        <taxon>Xenopus</taxon>
        <taxon>Xenopus</taxon>
    </lineage>
</organism>
<accession>Q6GPK9</accession>
<dbReference type="EC" id="2.7.11.1"/>
<dbReference type="EMBL" id="BC073108">
    <property type="protein sequence ID" value="AAH73108.1"/>
    <property type="molecule type" value="mRNA"/>
</dbReference>
<dbReference type="RefSeq" id="NP_001085661.1">
    <property type="nucleotide sequence ID" value="NM_001092192.1"/>
</dbReference>
<dbReference type="SMR" id="Q6GPK9"/>
<dbReference type="BioGRID" id="102250">
    <property type="interactions" value="1"/>
</dbReference>
<dbReference type="IntAct" id="Q6GPK9">
    <property type="interactions" value="2"/>
</dbReference>
<dbReference type="DNASU" id="444087"/>
<dbReference type="GeneID" id="444087"/>
<dbReference type="KEGG" id="xla:444087"/>
<dbReference type="AGR" id="Xenbase:XB-GENE-5714849"/>
<dbReference type="CTD" id="444087"/>
<dbReference type="Xenbase" id="XB-GENE-5714849">
    <property type="gene designation" value="taok2.L"/>
</dbReference>
<dbReference type="OrthoDB" id="10016527at2759"/>
<dbReference type="Proteomes" id="UP000186698">
    <property type="component" value="Chromosome 9_10L"/>
</dbReference>
<dbReference type="Bgee" id="444087">
    <property type="expression patterns" value="Expressed in brain and 19 other cell types or tissues"/>
</dbReference>
<dbReference type="GO" id="GO:0005737">
    <property type="term" value="C:cytoplasm"/>
    <property type="evidence" value="ECO:0000318"/>
    <property type="project" value="GO_Central"/>
</dbReference>
<dbReference type="GO" id="GO:0005524">
    <property type="term" value="F:ATP binding"/>
    <property type="evidence" value="ECO:0007669"/>
    <property type="project" value="UniProtKB-KW"/>
</dbReference>
<dbReference type="GO" id="GO:0106310">
    <property type="term" value="F:protein serine kinase activity"/>
    <property type="evidence" value="ECO:0007669"/>
    <property type="project" value="RHEA"/>
</dbReference>
<dbReference type="GO" id="GO:0004674">
    <property type="term" value="F:protein serine/threonine kinase activity"/>
    <property type="evidence" value="ECO:0000250"/>
    <property type="project" value="UniProtKB"/>
</dbReference>
<dbReference type="GO" id="GO:0006974">
    <property type="term" value="P:DNA damage response"/>
    <property type="evidence" value="ECO:0000250"/>
    <property type="project" value="UniProtKB"/>
</dbReference>
<dbReference type="GO" id="GO:0007095">
    <property type="term" value="P:mitotic G2 DNA damage checkpoint signaling"/>
    <property type="evidence" value="ECO:0000250"/>
    <property type="project" value="UniProtKB"/>
</dbReference>
<dbReference type="GO" id="GO:0046330">
    <property type="term" value="P:positive regulation of JNK cascade"/>
    <property type="evidence" value="ECO:0000318"/>
    <property type="project" value="GO_Central"/>
</dbReference>
<dbReference type="GO" id="GO:0032874">
    <property type="term" value="P:positive regulation of stress-activated MAPK cascade"/>
    <property type="evidence" value="ECO:0000250"/>
    <property type="project" value="UniProtKB"/>
</dbReference>
<dbReference type="GO" id="GO:0051403">
    <property type="term" value="P:stress-activated MAPK cascade"/>
    <property type="evidence" value="ECO:0000250"/>
    <property type="project" value="UniProtKB"/>
</dbReference>
<dbReference type="CDD" id="cd06634">
    <property type="entry name" value="STKc_TAO2"/>
    <property type="match status" value="1"/>
</dbReference>
<dbReference type="FunFam" id="1.10.510.10:FF:000030">
    <property type="entry name" value="Serine/threonine-protein kinase TAO2, putative"/>
    <property type="match status" value="1"/>
</dbReference>
<dbReference type="FunFam" id="3.30.200.20:FF:000029">
    <property type="entry name" value="Serine/threonine-protein kinase TAO2, putative"/>
    <property type="match status" value="1"/>
</dbReference>
<dbReference type="Gene3D" id="3.30.200.20">
    <property type="entry name" value="Phosphorylase Kinase, domain 1"/>
    <property type="match status" value="1"/>
</dbReference>
<dbReference type="Gene3D" id="1.10.510.10">
    <property type="entry name" value="Transferase(Phosphotransferase) domain 1"/>
    <property type="match status" value="1"/>
</dbReference>
<dbReference type="InterPro" id="IPR011009">
    <property type="entry name" value="Kinase-like_dom_sf"/>
</dbReference>
<dbReference type="InterPro" id="IPR000719">
    <property type="entry name" value="Prot_kinase_dom"/>
</dbReference>
<dbReference type="InterPro" id="IPR017441">
    <property type="entry name" value="Protein_kinase_ATP_BS"/>
</dbReference>
<dbReference type="InterPro" id="IPR008271">
    <property type="entry name" value="Ser/Thr_kinase_AS"/>
</dbReference>
<dbReference type="InterPro" id="IPR051234">
    <property type="entry name" value="TAO_STE20_kinase"/>
</dbReference>
<dbReference type="PANTHER" id="PTHR47167">
    <property type="entry name" value="SERINE/THREONINE-PROTEIN KINASE TAO1-LIKE PROTEIN"/>
    <property type="match status" value="1"/>
</dbReference>
<dbReference type="PANTHER" id="PTHR47167:SF6">
    <property type="entry name" value="SERINE_THREONINE-PROTEIN KINASE TAO2"/>
    <property type="match status" value="1"/>
</dbReference>
<dbReference type="Pfam" id="PF00069">
    <property type="entry name" value="Pkinase"/>
    <property type="match status" value="1"/>
</dbReference>
<dbReference type="SMART" id="SM00220">
    <property type="entry name" value="S_TKc"/>
    <property type="match status" value="1"/>
</dbReference>
<dbReference type="SUPFAM" id="SSF56112">
    <property type="entry name" value="Protein kinase-like (PK-like)"/>
    <property type="match status" value="1"/>
</dbReference>
<dbReference type="PROSITE" id="PS00107">
    <property type="entry name" value="PROTEIN_KINASE_ATP"/>
    <property type="match status" value="1"/>
</dbReference>
<dbReference type="PROSITE" id="PS50011">
    <property type="entry name" value="PROTEIN_KINASE_DOM"/>
    <property type="match status" value="1"/>
</dbReference>
<dbReference type="PROSITE" id="PS00108">
    <property type="entry name" value="PROTEIN_KINASE_ST"/>
    <property type="match status" value="1"/>
</dbReference>
<protein>
    <recommendedName>
        <fullName>Serine/threonine-protein kinase TAO2</fullName>
        <ecNumber>2.7.11.1</ecNumber>
    </recommendedName>
    <alternativeName>
        <fullName>Thousand and one amino acid protein 2</fullName>
    </alternativeName>
</protein>
<gene>
    <name type="primary">taok2</name>
</gene>
<keyword id="KW-0067">ATP-binding</keyword>
<keyword id="KW-0175">Coiled coil</keyword>
<keyword id="KW-0418">Kinase</keyword>
<keyword id="KW-0460">Magnesium</keyword>
<keyword id="KW-0547">Nucleotide-binding</keyword>
<keyword id="KW-1185">Reference proteome</keyword>
<keyword id="KW-0723">Serine/threonine-protein kinase</keyword>
<keyword id="KW-0808">Transferase</keyword>
<proteinExistence type="evidence at transcript level"/>
<name>TAOK2_XENLA</name>
<feature type="chain" id="PRO_0000086736" description="Serine/threonine-protein kinase TAO2">
    <location>
        <begin position="1"/>
        <end position="1025"/>
    </location>
</feature>
<feature type="domain" description="Protein kinase" evidence="3">
    <location>
        <begin position="28"/>
        <end position="281"/>
    </location>
</feature>
<feature type="region of interest" description="Disordered" evidence="5">
    <location>
        <begin position="349"/>
        <end position="377"/>
    </location>
</feature>
<feature type="region of interest" description="Disordered" evidence="5">
    <location>
        <begin position="899"/>
        <end position="930"/>
    </location>
</feature>
<feature type="region of interest" description="Disordered" evidence="5">
    <location>
        <begin position="945"/>
        <end position="1025"/>
    </location>
</feature>
<feature type="coiled-coil region" evidence="2">
    <location>
        <begin position="457"/>
        <end position="650"/>
    </location>
</feature>
<feature type="coiled-coil region" evidence="2">
    <location>
        <begin position="755"/>
        <end position="876"/>
    </location>
</feature>
<feature type="compositionally biased region" description="Low complexity" evidence="5">
    <location>
        <begin position="349"/>
        <end position="373"/>
    </location>
</feature>
<feature type="compositionally biased region" description="Pro residues" evidence="5">
    <location>
        <begin position="905"/>
        <end position="914"/>
    </location>
</feature>
<feature type="compositionally biased region" description="Low complexity" evidence="5">
    <location>
        <begin position="947"/>
        <end position="986"/>
    </location>
</feature>
<feature type="compositionally biased region" description="Polar residues" evidence="5">
    <location>
        <begin position="1007"/>
        <end position="1025"/>
    </location>
</feature>
<feature type="active site" description="Proton acceptor" evidence="3 4">
    <location>
        <position position="151"/>
    </location>
</feature>
<feature type="binding site" evidence="3">
    <location>
        <begin position="34"/>
        <end position="42"/>
    </location>
    <ligand>
        <name>ATP</name>
        <dbReference type="ChEBI" id="CHEBI:30616"/>
    </ligand>
</feature>
<feature type="binding site" evidence="3">
    <location>
        <position position="57"/>
    </location>
    <ligand>
        <name>ATP</name>
        <dbReference type="ChEBI" id="CHEBI:30616"/>
    </ligand>
</feature>
<reference key="1">
    <citation type="submission" date="2004-06" db="EMBL/GenBank/DDBJ databases">
        <authorList>
            <consortium name="NIH - Xenopus Gene Collection (XGC) project"/>
        </authorList>
    </citation>
    <scope>NUCLEOTIDE SEQUENCE [LARGE SCALE MRNA]</scope>
    <source>
        <tissue>Oocyte</tissue>
    </source>
</reference>
<evidence type="ECO:0000250" key="1"/>
<evidence type="ECO:0000255" key="2"/>
<evidence type="ECO:0000255" key="3">
    <source>
        <dbReference type="PROSITE-ProRule" id="PRU00159"/>
    </source>
</evidence>
<evidence type="ECO:0000255" key="4">
    <source>
        <dbReference type="PROSITE-ProRule" id="PRU10027"/>
    </source>
</evidence>
<evidence type="ECO:0000256" key="5">
    <source>
        <dbReference type="SAM" id="MobiDB-lite"/>
    </source>
</evidence>
<evidence type="ECO:0000305" key="6"/>
<sequence length="1025" mass="118120">MPSNARAGNLKDPEVAELFFKDDPEKLFADLREIGHGSFGAVYFARDIRNNEVVAIKKMSYSGKQSNEKWQDIIKEVKFLQKLRHPNTIEYKGCYLREHTAWLVMEYCLGSASDLLEVHKKPLQEMEIAAITHGALQGLAYLHNHNMIHRDVKAGNILLTEPGLVKLGDFGSASIMAPANSFVGTPYWMAPEVILAMDEGQYDGKVDVWSLGITSIELAERKPPLFNMNAMSALYHIAQNESPVLQSNHWSEYFRNFVDSCLQKIPQDRPTSDMLLKHRFLQRERPQTVIMELIQRTKDAVRELDNLQYRKMKKILFQDTQNGPNTETTEEEEEAEQFLHCTGTITSMESSQSVPSMSISASSQSSSVNSLADASDDSGEMAMMQEGEHTVTSNSSVIHRLPAHDNIYDDPYQPEMEAQQSSSAARRRAYCRNRDHFATIRTASLVTRQIQEHEQDSALREQMSGYKRMRRQHQKQLMALENKLKSELDEHQQRLDKELEAHRSNFSAENEKISKKHQAIFEKEAKGGMTEEKKFQQHILGQQKKELTNLLESQKRQYKIRKEQLKEELQENQSTPKREKQEWLLRQKESMQHYQAEEEANLLRRQRQYFELQCRQYKRKMLLARHNLDQDLLREELNKKQTQRDLECAMLLRQHECTQELEFRHLQLLQHTRSELIRMQHQTELGNQLEYNKRREQELRQKHAAEVRQQPKSLKSKELQIKRQFQDTCKIQTRQYKALRNHLLETTPKSEHKSILKRLKDEQTRKLAILAEQYDHSINEMLSTQALRLDETQEAEYQELRIQLQKELELLNAYQSKIKIHTDAQHERELKELEQRVSIRRALLEQRIEEEMLALQTERSERIRSLLERQAREIEAFDSESMRLGFSNMALTGIPAEAFNQGYQAPPPGWPSRPVPRSGSHWSHGVQNTGAPQLWRQPTLLAPPSASWGLHPPGSSSSLSALPSSSSSSSSSPSSSSGGRPGLLLLRNSPQPLRRGGSGGPSEAGLSRSTSVTSQLSNGSHLSYS</sequence>